<dbReference type="EMBL" id="AC007260">
    <property type="protein sequence ID" value="AAD30581.1"/>
    <property type="status" value="ALT_SEQ"/>
    <property type="molecule type" value="Genomic_DNA"/>
</dbReference>
<dbReference type="EMBL" id="CP002684">
    <property type="protein sequence ID" value="AEE36121.1"/>
    <property type="molecule type" value="Genomic_DNA"/>
</dbReference>
<dbReference type="EMBL" id="AY059808">
    <property type="protein sequence ID" value="AAL24290.1"/>
    <property type="molecule type" value="mRNA"/>
</dbReference>
<dbReference type="EMBL" id="BT000024">
    <property type="protein sequence ID" value="AAN15343.1"/>
    <property type="molecule type" value="mRNA"/>
</dbReference>
<dbReference type="EMBL" id="AY088098">
    <property type="protein sequence ID" value="AAM65644.1"/>
    <property type="molecule type" value="mRNA"/>
</dbReference>
<dbReference type="PIR" id="B96814">
    <property type="entry name" value="B96814"/>
</dbReference>
<dbReference type="RefSeq" id="NP_565182.1">
    <property type="nucleotide sequence ID" value="NM_106503.3"/>
</dbReference>
<dbReference type="SMR" id="Q93YR2"/>
<dbReference type="FunCoup" id="Q93YR2">
    <property type="interactions" value="437"/>
</dbReference>
<dbReference type="STRING" id="3702.Q93YR2"/>
<dbReference type="iPTMnet" id="Q93YR2"/>
<dbReference type="PaxDb" id="3702-AT1G78560.1"/>
<dbReference type="ProteomicsDB" id="240745"/>
<dbReference type="EnsemblPlants" id="AT1G78560.1">
    <property type="protein sequence ID" value="AT1G78560.1"/>
    <property type="gene ID" value="AT1G78560"/>
</dbReference>
<dbReference type="GeneID" id="844192"/>
<dbReference type="Gramene" id="AT1G78560.1">
    <property type="protein sequence ID" value="AT1G78560.1"/>
    <property type="gene ID" value="AT1G78560"/>
</dbReference>
<dbReference type="KEGG" id="ath:AT1G78560"/>
<dbReference type="Araport" id="AT1G78560"/>
<dbReference type="TAIR" id="AT1G78560">
    <property type="gene designation" value="BASS1"/>
</dbReference>
<dbReference type="eggNOG" id="KOG2718">
    <property type="taxonomic scope" value="Eukaryota"/>
</dbReference>
<dbReference type="HOGENOM" id="CLU_034788_1_2_1"/>
<dbReference type="InParanoid" id="Q93YR2"/>
<dbReference type="OMA" id="NWVQPKW"/>
<dbReference type="OrthoDB" id="203097at2759"/>
<dbReference type="PhylomeDB" id="Q93YR2"/>
<dbReference type="PRO" id="PR:Q93YR2"/>
<dbReference type="Proteomes" id="UP000006548">
    <property type="component" value="Chromosome 1"/>
</dbReference>
<dbReference type="ExpressionAtlas" id="Q93YR2">
    <property type="expression patterns" value="baseline and differential"/>
</dbReference>
<dbReference type="GO" id="GO:0009507">
    <property type="term" value="C:chloroplast"/>
    <property type="evidence" value="ECO:0007005"/>
    <property type="project" value="TAIR"/>
</dbReference>
<dbReference type="GO" id="GO:0009941">
    <property type="term" value="C:chloroplast envelope"/>
    <property type="evidence" value="ECO:0000314"/>
    <property type="project" value="UniProtKB"/>
</dbReference>
<dbReference type="GO" id="GO:0016020">
    <property type="term" value="C:membrane"/>
    <property type="evidence" value="ECO:0007669"/>
    <property type="project" value="UniProtKB-SubCell"/>
</dbReference>
<dbReference type="GO" id="GO:0098717">
    <property type="term" value="P:pantothenate import across plasma membrane"/>
    <property type="evidence" value="ECO:0000315"/>
    <property type="project" value="TAIR"/>
</dbReference>
<dbReference type="FunFam" id="1.20.1530.20:FF:000018">
    <property type="entry name" value="Probable sodium/metabolite cotransporter BASS1, chloroplastic"/>
    <property type="match status" value="1"/>
</dbReference>
<dbReference type="Gene3D" id="1.20.1530.20">
    <property type="match status" value="1"/>
</dbReference>
<dbReference type="InterPro" id="IPR002657">
    <property type="entry name" value="BilAc:Na_symport/Acr3"/>
</dbReference>
<dbReference type="InterPro" id="IPR004710">
    <property type="entry name" value="Bilac:Na_transpt"/>
</dbReference>
<dbReference type="InterPro" id="IPR038770">
    <property type="entry name" value="Na+/solute_symporter_sf"/>
</dbReference>
<dbReference type="PANTHER" id="PTHR10361:SF28">
    <property type="entry name" value="P3 PROTEIN-RELATED"/>
    <property type="match status" value="1"/>
</dbReference>
<dbReference type="PANTHER" id="PTHR10361">
    <property type="entry name" value="SODIUM-BILE ACID COTRANSPORTER"/>
    <property type="match status" value="1"/>
</dbReference>
<dbReference type="Pfam" id="PF01758">
    <property type="entry name" value="SBF"/>
    <property type="match status" value="1"/>
</dbReference>
<gene>
    <name type="primary">BASS1</name>
    <name type="synonym">BAT2</name>
    <name type="ordered locus">At1g78560</name>
    <name type="ORF">T30F21.11</name>
</gene>
<proteinExistence type="evidence at transcript level"/>
<comment type="function">
    <text evidence="1">May function as sodium-coupled metabolite transporter across the chloroplast envelope.</text>
</comment>
<comment type="subcellular location">
    <subcellularLocation>
        <location evidence="4">Membrane</location>
        <topology evidence="4">Multi-pass membrane protein</topology>
    </subcellularLocation>
    <subcellularLocation>
        <location evidence="4">Plastid</location>
        <location evidence="4">Chloroplast envelope</location>
    </subcellularLocation>
</comment>
<comment type="similarity">
    <text evidence="3">Belongs to the bile acid:sodium symporter (BASS) (TC 2.A.28) family.</text>
</comment>
<comment type="sequence caution" evidence="3">
    <conflict type="erroneous gene model prediction">
        <sequence resource="EMBL-CDS" id="AAD30581"/>
    </conflict>
</comment>
<sequence length="401" mass="42747">MASAISLSLLNGATPLKSNSLHKSRLTPLHLRTISCSRLSYSPSSREISLKTQSTVPISCRRSRFDFVPRCGISSNDLPTEKKKSFGEWVEFVGEAVSTAFPIWVSLGCLLGLMRPSTFNWVTPNWTIVGLTITMLGMGMTLTLDDLRGALSMPKELFAGFLLQYSVMPLSAFFVSKLLNLPPHYAAGLILVGCCPGGTASNIVTYIARGNVALSVLMTAASTVSAVIMTPLLTAKLAKQYITVDALGLLMSTLQVVLLPVLAGAFLNQYFKKLVKFVSPVMPPIAVGTVAILCGYAIGQNASAILMSGKQVVLASCLLHISGFLFGYLFSRILGIDVASSRTISIEVGMQNSVLGVVLATQHFGNPLTAVPCAVSSVCHSILGSVLAGIWRRSAPKQLED</sequence>
<organism>
    <name type="scientific">Arabidopsis thaliana</name>
    <name type="common">Mouse-ear cress</name>
    <dbReference type="NCBI Taxonomy" id="3702"/>
    <lineage>
        <taxon>Eukaryota</taxon>
        <taxon>Viridiplantae</taxon>
        <taxon>Streptophyta</taxon>
        <taxon>Embryophyta</taxon>
        <taxon>Tracheophyta</taxon>
        <taxon>Spermatophyta</taxon>
        <taxon>Magnoliopsida</taxon>
        <taxon>eudicotyledons</taxon>
        <taxon>Gunneridae</taxon>
        <taxon>Pentapetalae</taxon>
        <taxon>rosids</taxon>
        <taxon>malvids</taxon>
        <taxon>Brassicales</taxon>
        <taxon>Brassicaceae</taxon>
        <taxon>Camelineae</taxon>
        <taxon>Arabidopsis</taxon>
    </lineage>
</organism>
<protein>
    <recommendedName>
        <fullName>Probable sodium/metabolite cotransporter BASS1, chloroplastic</fullName>
    </recommendedName>
    <alternativeName>
        <fullName>Bile acid transporter 2</fullName>
    </alternativeName>
    <alternativeName>
        <fullName>Bile acid-sodium symporter family protein 1</fullName>
    </alternativeName>
</protein>
<keyword id="KW-0150">Chloroplast</keyword>
<keyword id="KW-0472">Membrane</keyword>
<keyword id="KW-0934">Plastid</keyword>
<keyword id="KW-1185">Reference proteome</keyword>
<keyword id="KW-0809">Transit peptide</keyword>
<keyword id="KW-0812">Transmembrane</keyword>
<keyword id="KW-1133">Transmembrane helix</keyword>
<keyword id="KW-0813">Transport</keyword>
<feature type="transit peptide" description="Chloroplast" evidence="2">
    <location>
        <begin position="1"/>
        <end position="70"/>
    </location>
</feature>
<feature type="chain" id="PRO_0000418602" description="Probable sodium/metabolite cotransporter BASS1, chloroplastic">
    <location>
        <begin position="71"/>
        <end position="401"/>
    </location>
</feature>
<feature type="transmembrane region" description="Helical" evidence="2">
    <location>
        <begin position="92"/>
        <end position="112"/>
    </location>
</feature>
<feature type="transmembrane region" description="Helical" evidence="2">
    <location>
        <begin position="122"/>
        <end position="142"/>
    </location>
</feature>
<feature type="transmembrane region" description="Helical" evidence="2">
    <location>
        <begin position="156"/>
        <end position="176"/>
    </location>
</feature>
<feature type="transmembrane region" description="Helical" evidence="2">
    <location>
        <begin position="187"/>
        <end position="207"/>
    </location>
</feature>
<feature type="transmembrane region" description="Helical" evidence="2">
    <location>
        <begin position="212"/>
        <end position="232"/>
    </location>
</feature>
<feature type="transmembrane region" description="Helical" evidence="2">
    <location>
        <begin position="247"/>
        <end position="267"/>
    </location>
</feature>
<feature type="transmembrane region" description="Helical" evidence="2">
    <location>
        <begin position="278"/>
        <end position="298"/>
    </location>
</feature>
<feature type="transmembrane region" description="Helical" evidence="2">
    <location>
        <begin position="311"/>
        <end position="331"/>
    </location>
</feature>
<feature type="transmembrane region" description="Helical" evidence="2">
    <location>
        <begin position="371"/>
        <end position="391"/>
    </location>
</feature>
<name>BASS1_ARATH</name>
<accession>Q93YR2</accession>
<accession>Q9SYM6</accession>
<evidence type="ECO:0000250" key="1"/>
<evidence type="ECO:0000255" key="2"/>
<evidence type="ECO:0000305" key="3"/>
<evidence type="ECO:0000305" key="4">
    <source>
    </source>
</evidence>
<reference key="1">
    <citation type="journal article" date="2000" name="Nature">
        <title>Sequence and analysis of chromosome 1 of the plant Arabidopsis thaliana.</title>
        <authorList>
            <person name="Theologis A."/>
            <person name="Ecker J.R."/>
            <person name="Palm C.J."/>
            <person name="Federspiel N.A."/>
            <person name="Kaul S."/>
            <person name="White O."/>
            <person name="Alonso J."/>
            <person name="Altafi H."/>
            <person name="Araujo R."/>
            <person name="Bowman C.L."/>
            <person name="Brooks S.Y."/>
            <person name="Buehler E."/>
            <person name="Chan A."/>
            <person name="Chao Q."/>
            <person name="Chen H."/>
            <person name="Cheuk R.F."/>
            <person name="Chin C.W."/>
            <person name="Chung M.K."/>
            <person name="Conn L."/>
            <person name="Conway A.B."/>
            <person name="Conway A.R."/>
            <person name="Creasy T.H."/>
            <person name="Dewar K."/>
            <person name="Dunn P."/>
            <person name="Etgu P."/>
            <person name="Feldblyum T.V."/>
            <person name="Feng J.-D."/>
            <person name="Fong B."/>
            <person name="Fujii C.Y."/>
            <person name="Gill J.E."/>
            <person name="Goldsmith A.D."/>
            <person name="Haas B."/>
            <person name="Hansen N.F."/>
            <person name="Hughes B."/>
            <person name="Huizar L."/>
            <person name="Hunter J.L."/>
            <person name="Jenkins J."/>
            <person name="Johnson-Hopson C."/>
            <person name="Khan S."/>
            <person name="Khaykin E."/>
            <person name="Kim C.J."/>
            <person name="Koo H.L."/>
            <person name="Kremenetskaia I."/>
            <person name="Kurtz D.B."/>
            <person name="Kwan A."/>
            <person name="Lam B."/>
            <person name="Langin-Hooper S."/>
            <person name="Lee A."/>
            <person name="Lee J.M."/>
            <person name="Lenz C.A."/>
            <person name="Li J.H."/>
            <person name="Li Y.-P."/>
            <person name="Lin X."/>
            <person name="Liu S.X."/>
            <person name="Liu Z.A."/>
            <person name="Luros J.S."/>
            <person name="Maiti R."/>
            <person name="Marziali A."/>
            <person name="Militscher J."/>
            <person name="Miranda M."/>
            <person name="Nguyen M."/>
            <person name="Nierman W.C."/>
            <person name="Osborne B.I."/>
            <person name="Pai G."/>
            <person name="Peterson J."/>
            <person name="Pham P.K."/>
            <person name="Rizzo M."/>
            <person name="Rooney T."/>
            <person name="Rowley D."/>
            <person name="Sakano H."/>
            <person name="Salzberg S.L."/>
            <person name="Schwartz J.R."/>
            <person name="Shinn P."/>
            <person name="Southwick A.M."/>
            <person name="Sun H."/>
            <person name="Tallon L.J."/>
            <person name="Tambunga G."/>
            <person name="Toriumi M.J."/>
            <person name="Town C.D."/>
            <person name="Utterback T."/>
            <person name="Van Aken S."/>
            <person name="Vaysberg M."/>
            <person name="Vysotskaia V.S."/>
            <person name="Walker M."/>
            <person name="Wu D."/>
            <person name="Yu G."/>
            <person name="Fraser C.M."/>
            <person name="Venter J.C."/>
            <person name="Davis R.W."/>
        </authorList>
    </citation>
    <scope>NUCLEOTIDE SEQUENCE [LARGE SCALE GENOMIC DNA]</scope>
    <source>
        <strain>cv. Columbia</strain>
    </source>
</reference>
<reference key="2">
    <citation type="journal article" date="2017" name="Plant J.">
        <title>Araport11: a complete reannotation of the Arabidopsis thaliana reference genome.</title>
        <authorList>
            <person name="Cheng C.Y."/>
            <person name="Krishnakumar V."/>
            <person name="Chan A.P."/>
            <person name="Thibaud-Nissen F."/>
            <person name="Schobel S."/>
            <person name="Town C.D."/>
        </authorList>
    </citation>
    <scope>GENOME REANNOTATION</scope>
    <source>
        <strain>cv. Columbia</strain>
    </source>
</reference>
<reference key="3">
    <citation type="journal article" date="2003" name="Science">
        <title>Empirical analysis of transcriptional activity in the Arabidopsis genome.</title>
        <authorList>
            <person name="Yamada K."/>
            <person name="Lim J."/>
            <person name="Dale J.M."/>
            <person name="Chen H."/>
            <person name="Shinn P."/>
            <person name="Palm C.J."/>
            <person name="Southwick A.M."/>
            <person name="Wu H.C."/>
            <person name="Kim C.J."/>
            <person name="Nguyen M."/>
            <person name="Pham P.K."/>
            <person name="Cheuk R.F."/>
            <person name="Karlin-Newmann G."/>
            <person name="Liu S.X."/>
            <person name="Lam B."/>
            <person name="Sakano H."/>
            <person name="Wu T."/>
            <person name="Yu G."/>
            <person name="Miranda M."/>
            <person name="Quach H.L."/>
            <person name="Tripp M."/>
            <person name="Chang C.H."/>
            <person name="Lee J.M."/>
            <person name="Toriumi M.J."/>
            <person name="Chan M.M."/>
            <person name="Tang C.C."/>
            <person name="Onodera C.S."/>
            <person name="Deng J.M."/>
            <person name="Akiyama K."/>
            <person name="Ansari Y."/>
            <person name="Arakawa T."/>
            <person name="Banh J."/>
            <person name="Banno F."/>
            <person name="Bowser L."/>
            <person name="Brooks S.Y."/>
            <person name="Carninci P."/>
            <person name="Chao Q."/>
            <person name="Choy N."/>
            <person name="Enju A."/>
            <person name="Goldsmith A.D."/>
            <person name="Gurjal M."/>
            <person name="Hansen N.F."/>
            <person name="Hayashizaki Y."/>
            <person name="Johnson-Hopson C."/>
            <person name="Hsuan V.W."/>
            <person name="Iida K."/>
            <person name="Karnes M."/>
            <person name="Khan S."/>
            <person name="Koesema E."/>
            <person name="Ishida J."/>
            <person name="Jiang P.X."/>
            <person name="Jones T."/>
            <person name="Kawai J."/>
            <person name="Kamiya A."/>
            <person name="Meyers C."/>
            <person name="Nakajima M."/>
            <person name="Narusaka M."/>
            <person name="Seki M."/>
            <person name="Sakurai T."/>
            <person name="Satou M."/>
            <person name="Tamse R."/>
            <person name="Vaysberg M."/>
            <person name="Wallender E.K."/>
            <person name="Wong C."/>
            <person name="Yamamura Y."/>
            <person name="Yuan S."/>
            <person name="Shinozaki K."/>
            <person name="Davis R.W."/>
            <person name="Theologis A."/>
            <person name="Ecker J.R."/>
        </authorList>
    </citation>
    <scope>NUCLEOTIDE SEQUENCE [LARGE SCALE MRNA]</scope>
    <source>
        <strain>cv. Columbia</strain>
    </source>
</reference>
<reference key="4">
    <citation type="submission" date="2002-03" db="EMBL/GenBank/DDBJ databases">
        <title>Full-length cDNA from Arabidopsis thaliana.</title>
        <authorList>
            <person name="Brover V.V."/>
            <person name="Troukhan M.E."/>
            <person name="Alexandrov N.A."/>
            <person name="Lu Y.-P."/>
            <person name="Flavell R.B."/>
            <person name="Feldmann K.A."/>
        </authorList>
    </citation>
    <scope>NUCLEOTIDE SEQUENCE [LARGE SCALE MRNA]</scope>
</reference>
<reference key="5">
    <citation type="journal article" date="2009" name="Plant Cell">
        <title>The plastidic bile acid transporter 5 is required for the biosynthesis of methionine-derived glucosinolates in Arabidopsis thaliana.</title>
        <authorList>
            <person name="Gigolashvili T."/>
            <person name="Yatusevich R."/>
            <person name="Rollwitz I."/>
            <person name="Humphry M."/>
            <person name="Gershenzon J."/>
            <person name="Fluegge U.-I."/>
        </authorList>
    </citation>
    <scope>SUBCELLULAR LOCATION</scope>
</reference>